<sequence length="238" mass="25863">MSNSLLILGSTGLVGGQVVKFAQTSKDFSKIFTVTRRKPEFANTASTTESPRIDTIVETDSSKWPQAISNLEPAPLAYISAFGTTRANAGSAEKFKEIDYGINYESAKAAKEAGAKVCVLVSSYGANAKSPFLYMKTKGELENAIIDLKFPYTIILQPGVLLGERNESKGFGNDWAVKFGKLCKGTWFAPLLQPIEASDLGRIAVEFAERGLKGEFRENVLKVSGSELTELVDDFKIV</sequence>
<dbReference type="EMBL" id="CH981524">
    <property type="protein sequence ID" value="EDK42189.1"/>
    <property type="molecule type" value="Genomic_DNA"/>
</dbReference>
<dbReference type="RefSeq" id="XP_001527847.1">
    <property type="nucleotide sequence ID" value="XM_001527797.1"/>
</dbReference>
<dbReference type="SMR" id="A5DSN1"/>
<dbReference type="FunCoup" id="A5DSN1">
    <property type="interactions" value="91"/>
</dbReference>
<dbReference type="STRING" id="379508.A5DSN1"/>
<dbReference type="GeneID" id="5235569"/>
<dbReference type="KEGG" id="lel:PVL30_000359"/>
<dbReference type="VEuPathDB" id="FungiDB:LELG_00367"/>
<dbReference type="eggNOG" id="KOG4039">
    <property type="taxonomic scope" value="Eukaryota"/>
</dbReference>
<dbReference type="HOGENOM" id="CLU_071330_2_2_1"/>
<dbReference type="InParanoid" id="A5DSN1"/>
<dbReference type="OMA" id="CIENAKA"/>
<dbReference type="OrthoDB" id="430436at2759"/>
<dbReference type="Proteomes" id="UP000001996">
    <property type="component" value="Unassembled WGS sequence"/>
</dbReference>
<dbReference type="GO" id="GO:0005741">
    <property type="term" value="C:mitochondrial outer membrane"/>
    <property type="evidence" value="ECO:0007669"/>
    <property type="project" value="UniProtKB-SubCell"/>
</dbReference>
<dbReference type="GO" id="GO:0051170">
    <property type="term" value="P:import into nucleus"/>
    <property type="evidence" value="ECO:0007669"/>
    <property type="project" value="TreeGrafter"/>
</dbReference>
<dbReference type="FunFam" id="3.40.50.720:FF:000366">
    <property type="entry name" value="Protein FMP52, mitochondrial"/>
    <property type="match status" value="1"/>
</dbReference>
<dbReference type="Gene3D" id="3.40.50.720">
    <property type="entry name" value="NAD(P)-binding Rossmann-like Domain"/>
    <property type="match status" value="1"/>
</dbReference>
<dbReference type="InterPro" id="IPR016040">
    <property type="entry name" value="NAD(P)-bd_dom"/>
</dbReference>
<dbReference type="InterPro" id="IPR036291">
    <property type="entry name" value="NAD(P)-bd_dom_sf"/>
</dbReference>
<dbReference type="PANTHER" id="PTHR14097">
    <property type="entry name" value="OXIDOREDUCTASE HTATIP2"/>
    <property type="match status" value="1"/>
</dbReference>
<dbReference type="PANTHER" id="PTHR14097:SF7">
    <property type="entry name" value="OXIDOREDUCTASE HTATIP2"/>
    <property type="match status" value="1"/>
</dbReference>
<dbReference type="Pfam" id="PF13460">
    <property type="entry name" value="NAD_binding_10"/>
    <property type="match status" value="1"/>
</dbReference>
<dbReference type="SUPFAM" id="SSF51735">
    <property type="entry name" value="NAD(P)-binding Rossmann-fold domains"/>
    <property type="match status" value="1"/>
</dbReference>
<accession>A5DSN1</accession>
<comment type="subcellular location">
    <subcellularLocation>
        <location evidence="1">Mitochondrion outer membrane</location>
        <topology evidence="1">Peripheral membrane protein</topology>
    </subcellularLocation>
</comment>
<comment type="similarity">
    <text evidence="2">Belongs to the FMP52 family.</text>
</comment>
<evidence type="ECO:0000250" key="1"/>
<evidence type="ECO:0000305" key="2"/>
<feature type="transit peptide" description="Mitochondrion">
    <location>
        <begin position="1"/>
        <end status="unknown"/>
    </location>
</feature>
<feature type="chain" id="PRO_0000301824" description="Protein FMP52, mitochondrial">
    <location>
        <begin status="unknown"/>
        <end position="238"/>
    </location>
</feature>
<protein>
    <recommendedName>
        <fullName>Protein FMP52, mitochondrial</fullName>
    </recommendedName>
</protein>
<organism>
    <name type="scientific">Lodderomyces elongisporus (strain ATCC 11503 / CBS 2605 / JCM 1781 / NBRC 1676 / NRRL YB-4239)</name>
    <name type="common">Yeast</name>
    <name type="synonym">Saccharomyces elongisporus</name>
    <dbReference type="NCBI Taxonomy" id="379508"/>
    <lineage>
        <taxon>Eukaryota</taxon>
        <taxon>Fungi</taxon>
        <taxon>Dikarya</taxon>
        <taxon>Ascomycota</taxon>
        <taxon>Saccharomycotina</taxon>
        <taxon>Pichiomycetes</taxon>
        <taxon>Debaryomycetaceae</taxon>
        <taxon>Candida/Lodderomyces clade</taxon>
        <taxon>Lodderomyces</taxon>
    </lineage>
</organism>
<reference key="1">
    <citation type="journal article" date="2009" name="Nature">
        <title>Evolution of pathogenicity and sexual reproduction in eight Candida genomes.</title>
        <authorList>
            <person name="Butler G."/>
            <person name="Rasmussen M.D."/>
            <person name="Lin M.F."/>
            <person name="Santos M.A.S."/>
            <person name="Sakthikumar S."/>
            <person name="Munro C.A."/>
            <person name="Rheinbay E."/>
            <person name="Grabherr M."/>
            <person name="Forche A."/>
            <person name="Reedy J.L."/>
            <person name="Agrafioti I."/>
            <person name="Arnaud M.B."/>
            <person name="Bates S."/>
            <person name="Brown A.J.P."/>
            <person name="Brunke S."/>
            <person name="Costanzo M.C."/>
            <person name="Fitzpatrick D.A."/>
            <person name="de Groot P.W.J."/>
            <person name="Harris D."/>
            <person name="Hoyer L.L."/>
            <person name="Hube B."/>
            <person name="Klis F.M."/>
            <person name="Kodira C."/>
            <person name="Lennard N."/>
            <person name="Logue M.E."/>
            <person name="Martin R."/>
            <person name="Neiman A.M."/>
            <person name="Nikolaou E."/>
            <person name="Quail M.A."/>
            <person name="Quinn J."/>
            <person name="Santos M.C."/>
            <person name="Schmitzberger F.F."/>
            <person name="Sherlock G."/>
            <person name="Shah P."/>
            <person name="Silverstein K.A.T."/>
            <person name="Skrzypek M.S."/>
            <person name="Soll D."/>
            <person name="Staggs R."/>
            <person name="Stansfield I."/>
            <person name="Stumpf M.P.H."/>
            <person name="Sudbery P.E."/>
            <person name="Srikantha T."/>
            <person name="Zeng Q."/>
            <person name="Berman J."/>
            <person name="Berriman M."/>
            <person name="Heitman J."/>
            <person name="Gow N.A.R."/>
            <person name="Lorenz M.C."/>
            <person name="Birren B.W."/>
            <person name="Kellis M."/>
            <person name="Cuomo C.A."/>
        </authorList>
    </citation>
    <scope>NUCLEOTIDE SEQUENCE [LARGE SCALE GENOMIC DNA]</scope>
    <source>
        <strain>ATCC 11503 / BCRC 21390 / CBS 2605 / JCM 1781 / NBRC 1676 / NRRL YB-4239</strain>
    </source>
</reference>
<gene>
    <name type="primary">FMP52</name>
    <name type="ORF">LELG_00367</name>
</gene>
<name>FMP52_LODEL</name>
<keyword id="KW-0472">Membrane</keyword>
<keyword id="KW-0496">Mitochondrion</keyword>
<keyword id="KW-1000">Mitochondrion outer membrane</keyword>
<keyword id="KW-1185">Reference proteome</keyword>
<keyword id="KW-0809">Transit peptide</keyword>
<proteinExistence type="inferred from homology"/>